<proteinExistence type="inferred from homology"/>
<evidence type="ECO:0000255" key="1">
    <source>
        <dbReference type="HAMAP-Rule" id="MF_01306"/>
    </source>
</evidence>
<evidence type="ECO:0000305" key="2"/>
<feature type="chain" id="PRO_0000293359" description="Small ribosomal subunit protein uS4">
    <location>
        <begin position="1"/>
        <end position="206"/>
    </location>
</feature>
<feature type="domain" description="S4 RNA-binding" evidence="1">
    <location>
        <begin position="96"/>
        <end position="156"/>
    </location>
</feature>
<dbReference type="EMBL" id="CP000282">
    <property type="protein sequence ID" value="ABD80245.1"/>
    <property type="molecule type" value="Genomic_DNA"/>
</dbReference>
<dbReference type="RefSeq" id="WP_011467465.1">
    <property type="nucleotide sequence ID" value="NC_007912.1"/>
</dbReference>
<dbReference type="SMR" id="Q21M34"/>
<dbReference type="STRING" id="203122.Sde_0983"/>
<dbReference type="GeneID" id="98612667"/>
<dbReference type="KEGG" id="sde:Sde_0983"/>
<dbReference type="eggNOG" id="COG0522">
    <property type="taxonomic scope" value="Bacteria"/>
</dbReference>
<dbReference type="HOGENOM" id="CLU_092403_0_2_6"/>
<dbReference type="OrthoDB" id="9803672at2"/>
<dbReference type="Proteomes" id="UP000001947">
    <property type="component" value="Chromosome"/>
</dbReference>
<dbReference type="GO" id="GO:0015935">
    <property type="term" value="C:small ribosomal subunit"/>
    <property type="evidence" value="ECO:0007669"/>
    <property type="project" value="InterPro"/>
</dbReference>
<dbReference type="GO" id="GO:0019843">
    <property type="term" value="F:rRNA binding"/>
    <property type="evidence" value="ECO:0007669"/>
    <property type="project" value="UniProtKB-UniRule"/>
</dbReference>
<dbReference type="GO" id="GO:0003735">
    <property type="term" value="F:structural constituent of ribosome"/>
    <property type="evidence" value="ECO:0007669"/>
    <property type="project" value="InterPro"/>
</dbReference>
<dbReference type="GO" id="GO:0042274">
    <property type="term" value="P:ribosomal small subunit biogenesis"/>
    <property type="evidence" value="ECO:0007669"/>
    <property type="project" value="TreeGrafter"/>
</dbReference>
<dbReference type="GO" id="GO:0006412">
    <property type="term" value="P:translation"/>
    <property type="evidence" value="ECO:0007669"/>
    <property type="project" value="UniProtKB-UniRule"/>
</dbReference>
<dbReference type="CDD" id="cd00165">
    <property type="entry name" value="S4"/>
    <property type="match status" value="1"/>
</dbReference>
<dbReference type="FunFam" id="1.10.1050.10:FF:000001">
    <property type="entry name" value="30S ribosomal protein S4"/>
    <property type="match status" value="1"/>
</dbReference>
<dbReference type="FunFam" id="3.10.290.10:FF:000001">
    <property type="entry name" value="30S ribosomal protein S4"/>
    <property type="match status" value="1"/>
</dbReference>
<dbReference type="Gene3D" id="1.10.1050.10">
    <property type="entry name" value="Ribosomal Protein S4 Delta 41, Chain A, domain 1"/>
    <property type="match status" value="1"/>
</dbReference>
<dbReference type="Gene3D" id="3.10.290.10">
    <property type="entry name" value="RNA-binding S4 domain"/>
    <property type="match status" value="1"/>
</dbReference>
<dbReference type="HAMAP" id="MF_01306_B">
    <property type="entry name" value="Ribosomal_uS4_B"/>
    <property type="match status" value="1"/>
</dbReference>
<dbReference type="InterPro" id="IPR022801">
    <property type="entry name" value="Ribosomal_uS4"/>
</dbReference>
<dbReference type="InterPro" id="IPR005709">
    <property type="entry name" value="Ribosomal_uS4_bac-type"/>
</dbReference>
<dbReference type="InterPro" id="IPR018079">
    <property type="entry name" value="Ribosomal_uS4_CS"/>
</dbReference>
<dbReference type="InterPro" id="IPR001912">
    <property type="entry name" value="Ribosomal_uS4_N"/>
</dbReference>
<dbReference type="InterPro" id="IPR002942">
    <property type="entry name" value="S4_RNA-bd"/>
</dbReference>
<dbReference type="InterPro" id="IPR036986">
    <property type="entry name" value="S4_RNA-bd_sf"/>
</dbReference>
<dbReference type="NCBIfam" id="NF003717">
    <property type="entry name" value="PRK05327.1"/>
    <property type="match status" value="1"/>
</dbReference>
<dbReference type="NCBIfam" id="TIGR01017">
    <property type="entry name" value="rpsD_bact"/>
    <property type="match status" value="1"/>
</dbReference>
<dbReference type="PANTHER" id="PTHR11831">
    <property type="entry name" value="30S 40S RIBOSOMAL PROTEIN"/>
    <property type="match status" value="1"/>
</dbReference>
<dbReference type="PANTHER" id="PTHR11831:SF4">
    <property type="entry name" value="SMALL RIBOSOMAL SUBUNIT PROTEIN US4M"/>
    <property type="match status" value="1"/>
</dbReference>
<dbReference type="Pfam" id="PF00163">
    <property type="entry name" value="Ribosomal_S4"/>
    <property type="match status" value="1"/>
</dbReference>
<dbReference type="Pfam" id="PF01479">
    <property type="entry name" value="S4"/>
    <property type="match status" value="1"/>
</dbReference>
<dbReference type="SMART" id="SM01390">
    <property type="entry name" value="Ribosomal_S4"/>
    <property type="match status" value="1"/>
</dbReference>
<dbReference type="SMART" id="SM00363">
    <property type="entry name" value="S4"/>
    <property type="match status" value="1"/>
</dbReference>
<dbReference type="SUPFAM" id="SSF55174">
    <property type="entry name" value="Alpha-L RNA-binding motif"/>
    <property type="match status" value="1"/>
</dbReference>
<dbReference type="PROSITE" id="PS00632">
    <property type="entry name" value="RIBOSOMAL_S4"/>
    <property type="match status" value="1"/>
</dbReference>
<dbReference type="PROSITE" id="PS50889">
    <property type="entry name" value="S4"/>
    <property type="match status" value="1"/>
</dbReference>
<reference key="1">
    <citation type="journal article" date="2008" name="PLoS Genet.">
        <title>Complete genome sequence of the complex carbohydrate-degrading marine bacterium, Saccharophagus degradans strain 2-40 T.</title>
        <authorList>
            <person name="Weiner R.M."/>
            <person name="Taylor L.E. II"/>
            <person name="Henrissat B."/>
            <person name="Hauser L."/>
            <person name="Land M."/>
            <person name="Coutinho P.M."/>
            <person name="Rancurel C."/>
            <person name="Saunders E.H."/>
            <person name="Longmire A.G."/>
            <person name="Zhang H."/>
            <person name="Bayer E.A."/>
            <person name="Gilbert H.J."/>
            <person name="Larimer F."/>
            <person name="Zhulin I.B."/>
            <person name="Ekborg N.A."/>
            <person name="Lamed R."/>
            <person name="Richardson P.M."/>
            <person name="Borovok I."/>
            <person name="Hutcheson S."/>
        </authorList>
    </citation>
    <scope>NUCLEOTIDE SEQUENCE [LARGE SCALE GENOMIC DNA]</scope>
    <source>
        <strain>2-40 / ATCC 43961 / DSM 17024</strain>
    </source>
</reference>
<accession>Q21M34</accession>
<name>RS4_SACD2</name>
<protein>
    <recommendedName>
        <fullName evidence="1">Small ribosomal subunit protein uS4</fullName>
    </recommendedName>
    <alternativeName>
        <fullName evidence="2">30S ribosomal protein S4</fullName>
    </alternativeName>
</protein>
<keyword id="KW-1185">Reference proteome</keyword>
<keyword id="KW-0687">Ribonucleoprotein</keyword>
<keyword id="KW-0689">Ribosomal protein</keyword>
<keyword id="KW-0694">RNA-binding</keyword>
<keyword id="KW-0699">rRNA-binding</keyword>
<comment type="function">
    <text evidence="1">One of the primary rRNA binding proteins, it binds directly to 16S rRNA where it nucleates assembly of the body of the 30S subunit.</text>
</comment>
<comment type="function">
    <text evidence="1">With S5 and S12 plays an important role in translational accuracy.</text>
</comment>
<comment type="subunit">
    <text evidence="1">Part of the 30S ribosomal subunit. Contacts protein S5. The interaction surface between S4 and S5 is involved in control of translational fidelity.</text>
</comment>
<comment type="similarity">
    <text evidence="1">Belongs to the universal ribosomal protein uS4 family.</text>
</comment>
<gene>
    <name evidence="1" type="primary">rpsD</name>
    <name type="ordered locus">Sde_0983</name>
</gene>
<organism>
    <name type="scientific">Saccharophagus degradans (strain 2-40 / ATCC 43961 / DSM 17024)</name>
    <dbReference type="NCBI Taxonomy" id="203122"/>
    <lineage>
        <taxon>Bacteria</taxon>
        <taxon>Pseudomonadati</taxon>
        <taxon>Pseudomonadota</taxon>
        <taxon>Gammaproteobacteria</taxon>
        <taxon>Cellvibrionales</taxon>
        <taxon>Cellvibrionaceae</taxon>
        <taxon>Saccharophagus</taxon>
    </lineage>
</organism>
<sequence>MARYIGPTCKLSRREGTDLFLKSGVRPLESKCKAEAAPGQHGQRRGRLSDYGVQLREKQKVRRIYGVLEKQFRNYYKDAARIKGATGENLLKLLEGRLDNVVYRMGFGSTRAESRQLVSHKAILVNGKTVNIPSFQVNVGDVISVREKSKNQLRIQNSLGIAGQRADVEWVDVNTEKKEGVFKRCPDRADLPAEINENLIVELYSK</sequence>